<organism>
    <name type="scientific">Magnetococcus marinus (strain ATCC BAA-1437 / JCM 17883 / MC-1)</name>
    <dbReference type="NCBI Taxonomy" id="156889"/>
    <lineage>
        <taxon>Bacteria</taxon>
        <taxon>Pseudomonadati</taxon>
        <taxon>Pseudomonadota</taxon>
        <taxon>Alphaproteobacteria</taxon>
        <taxon>Magnetococcales</taxon>
        <taxon>Magnetococcaceae</taxon>
        <taxon>Magnetococcus</taxon>
    </lineage>
</organism>
<keyword id="KW-0963">Cytoplasm</keyword>
<keyword id="KW-0227">DNA damage</keyword>
<keyword id="KW-0233">DNA recombination</keyword>
<keyword id="KW-0234">DNA repair</keyword>
<keyword id="KW-0238">DNA-binding</keyword>
<keyword id="KW-0255">Endonuclease</keyword>
<keyword id="KW-0378">Hydrolase</keyword>
<keyword id="KW-0460">Magnesium</keyword>
<keyword id="KW-0479">Metal-binding</keyword>
<keyword id="KW-0540">Nuclease</keyword>
<keyword id="KW-1185">Reference proteome</keyword>
<comment type="function">
    <text evidence="1">The RuvA-RuvB-RuvC complex processes Holliday junction (HJ) DNA during genetic recombination and DNA repair. Endonuclease that resolves HJ intermediates. Cleaves cruciform DNA by making single-stranded nicks across the HJ at symmetrical positions within the homologous arms, yielding a 5'-phosphate and a 3'-hydroxyl group; requires a central core of homology in the junction. The consensus cleavage sequence is 5'-(A/T)TT(C/G)-3'. Cleavage occurs on the 3'-side of the TT dinucleotide at the point of strand exchange. HJ branch migration catalyzed by RuvA-RuvB allows RuvC to scan DNA until it finds its consensus sequence, where it cleaves and resolves the cruciform DNA.</text>
</comment>
<comment type="catalytic activity">
    <reaction evidence="1">
        <text>Endonucleolytic cleavage at a junction such as a reciprocal single-stranded crossover between two homologous DNA duplexes (Holliday junction).</text>
        <dbReference type="EC" id="3.1.21.10"/>
    </reaction>
</comment>
<comment type="cofactor">
    <cofactor evidence="1">
        <name>Mg(2+)</name>
        <dbReference type="ChEBI" id="CHEBI:18420"/>
    </cofactor>
    <text evidence="1">Binds 2 Mg(2+) ion per subunit.</text>
</comment>
<comment type="subunit">
    <text evidence="1">Homodimer which binds Holliday junction (HJ) DNA. The HJ becomes 2-fold symmetrical on binding to RuvC with unstacked arms; it has a different conformation from HJ DNA in complex with RuvA. In the full resolvosome a probable DNA-RuvA(4)-RuvB(12)-RuvC(2) complex forms which resolves the HJ.</text>
</comment>
<comment type="subcellular location">
    <subcellularLocation>
        <location evidence="1">Cytoplasm</location>
    </subcellularLocation>
</comment>
<comment type="similarity">
    <text evidence="1">Belongs to the RuvC family.</text>
</comment>
<evidence type="ECO:0000255" key="1">
    <source>
        <dbReference type="HAMAP-Rule" id="MF_00034"/>
    </source>
</evidence>
<gene>
    <name evidence="1" type="primary">ruvC</name>
    <name type="ordered locus">Mmc1_0478</name>
</gene>
<sequence length="180" mass="19589">MSSASPIRVIGIDPGSNVTGWGVIDGLGQRQQVVEYGTIRLDGKEPLPMRLHQIHAQLVSLIQRLQPHEMAVEEVFVSQNVQSALKLGHARGAAIVAGAQMGLPIAEYTAMQVKKAVVGYGRAEKNQMQEMMRMLLNLDKKPAQDAADGLAIAMCHLNQRQWHQQTLPAAILGLQRGGRA</sequence>
<dbReference type="EC" id="3.1.21.10" evidence="1"/>
<dbReference type="EMBL" id="CP000471">
    <property type="protein sequence ID" value="ABK43003.1"/>
    <property type="molecule type" value="Genomic_DNA"/>
</dbReference>
<dbReference type="SMR" id="A0L4W0"/>
<dbReference type="STRING" id="156889.Mmc1_0478"/>
<dbReference type="KEGG" id="mgm:Mmc1_0478"/>
<dbReference type="eggNOG" id="COG0817">
    <property type="taxonomic scope" value="Bacteria"/>
</dbReference>
<dbReference type="HOGENOM" id="CLU_091257_3_1_5"/>
<dbReference type="OrthoDB" id="9805499at2"/>
<dbReference type="Proteomes" id="UP000002586">
    <property type="component" value="Chromosome"/>
</dbReference>
<dbReference type="GO" id="GO:0005737">
    <property type="term" value="C:cytoplasm"/>
    <property type="evidence" value="ECO:0007669"/>
    <property type="project" value="UniProtKB-SubCell"/>
</dbReference>
<dbReference type="GO" id="GO:0048476">
    <property type="term" value="C:Holliday junction resolvase complex"/>
    <property type="evidence" value="ECO:0007669"/>
    <property type="project" value="UniProtKB-UniRule"/>
</dbReference>
<dbReference type="GO" id="GO:0008821">
    <property type="term" value="F:crossover junction DNA endonuclease activity"/>
    <property type="evidence" value="ECO:0007669"/>
    <property type="project" value="UniProtKB-UniRule"/>
</dbReference>
<dbReference type="GO" id="GO:0003677">
    <property type="term" value="F:DNA binding"/>
    <property type="evidence" value="ECO:0007669"/>
    <property type="project" value="UniProtKB-KW"/>
</dbReference>
<dbReference type="GO" id="GO:0000287">
    <property type="term" value="F:magnesium ion binding"/>
    <property type="evidence" value="ECO:0007669"/>
    <property type="project" value="UniProtKB-UniRule"/>
</dbReference>
<dbReference type="GO" id="GO:0006310">
    <property type="term" value="P:DNA recombination"/>
    <property type="evidence" value="ECO:0007669"/>
    <property type="project" value="UniProtKB-UniRule"/>
</dbReference>
<dbReference type="GO" id="GO:0006281">
    <property type="term" value="P:DNA repair"/>
    <property type="evidence" value="ECO:0007669"/>
    <property type="project" value="UniProtKB-UniRule"/>
</dbReference>
<dbReference type="CDD" id="cd16962">
    <property type="entry name" value="RuvC"/>
    <property type="match status" value="1"/>
</dbReference>
<dbReference type="FunFam" id="3.30.420.10:FF:000002">
    <property type="entry name" value="Crossover junction endodeoxyribonuclease RuvC"/>
    <property type="match status" value="1"/>
</dbReference>
<dbReference type="Gene3D" id="3.30.420.10">
    <property type="entry name" value="Ribonuclease H-like superfamily/Ribonuclease H"/>
    <property type="match status" value="1"/>
</dbReference>
<dbReference type="HAMAP" id="MF_00034">
    <property type="entry name" value="RuvC"/>
    <property type="match status" value="1"/>
</dbReference>
<dbReference type="InterPro" id="IPR012337">
    <property type="entry name" value="RNaseH-like_sf"/>
</dbReference>
<dbReference type="InterPro" id="IPR036397">
    <property type="entry name" value="RNaseH_sf"/>
</dbReference>
<dbReference type="InterPro" id="IPR020563">
    <property type="entry name" value="X-over_junc_endoDNase_Mg_BS"/>
</dbReference>
<dbReference type="InterPro" id="IPR002176">
    <property type="entry name" value="X-over_junc_endoDNase_RuvC"/>
</dbReference>
<dbReference type="NCBIfam" id="NF000711">
    <property type="entry name" value="PRK00039.2-1"/>
    <property type="match status" value="1"/>
</dbReference>
<dbReference type="NCBIfam" id="TIGR00228">
    <property type="entry name" value="ruvC"/>
    <property type="match status" value="1"/>
</dbReference>
<dbReference type="PANTHER" id="PTHR30194">
    <property type="entry name" value="CROSSOVER JUNCTION ENDODEOXYRIBONUCLEASE RUVC"/>
    <property type="match status" value="1"/>
</dbReference>
<dbReference type="PANTHER" id="PTHR30194:SF3">
    <property type="entry name" value="CROSSOVER JUNCTION ENDODEOXYRIBONUCLEASE RUVC"/>
    <property type="match status" value="1"/>
</dbReference>
<dbReference type="Pfam" id="PF02075">
    <property type="entry name" value="RuvC"/>
    <property type="match status" value="1"/>
</dbReference>
<dbReference type="PRINTS" id="PR00696">
    <property type="entry name" value="RSOLVASERUVC"/>
</dbReference>
<dbReference type="SUPFAM" id="SSF53098">
    <property type="entry name" value="Ribonuclease H-like"/>
    <property type="match status" value="1"/>
</dbReference>
<dbReference type="PROSITE" id="PS01321">
    <property type="entry name" value="RUVC"/>
    <property type="match status" value="1"/>
</dbReference>
<reference key="1">
    <citation type="journal article" date="2009" name="Appl. Environ. Microbiol.">
        <title>Complete genome sequence of the chemolithoautotrophic marine magnetotactic coccus strain MC-1.</title>
        <authorList>
            <person name="Schubbe S."/>
            <person name="Williams T.J."/>
            <person name="Xie G."/>
            <person name="Kiss H.E."/>
            <person name="Brettin T.S."/>
            <person name="Martinez D."/>
            <person name="Ross C.A."/>
            <person name="Schuler D."/>
            <person name="Cox B.L."/>
            <person name="Nealson K.H."/>
            <person name="Bazylinski D.A."/>
        </authorList>
    </citation>
    <scope>NUCLEOTIDE SEQUENCE [LARGE SCALE GENOMIC DNA]</scope>
    <source>
        <strain>ATCC BAA-1437 / JCM 17883 / MC-1</strain>
    </source>
</reference>
<proteinExistence type="inferred from homology"/>
<accession>A0L4W0</accession>
<name>RUVC_MAGMM</name>
<protein>
    <recommendedName>
        <fullName evidence="1">Crossover junction endodeoxyribonuclease RuvC</fullName>
        <ecNumber evidence="1">3.1.21.10</ecNumber>
    </recommendedName>
    <alternativeName>
        <fullName evidence="1">Holliday junction nuclease RuvC</fullName>
    </alternativeName>
    <alternativeName>
        <fullName evidence="1">Holliday junction resolvase RuvC</fullName>
    </alternativeName>
</protein>
<feature type="chain" id="PRO_0000332424" description="Crossover junction endodeoxyribonuclease RuvC">
    <location>
        <begin position="1"/>
        <end position="180"/>
    </location>
</feature>
<feature type="active site" evidence="1">
    <location>
        <position position="13"/>
    </location>
</feature>
<feature type="active site" evidence="1">
    <location>
        <position position="73"/>
    </location>
</feature>
<feature type="active site" evidence="1">
    <location>
        <position position="145"/>
    </location>
</feature>
<feature type="binding site" evidence="1">
    <location>
        <position position="13"/>
    </location>
    <ligand>
        <name>Mg(2+)</name>
        <dbReference type="ChEBI" id="CHEBI:18420"/>
        <label>1</label>
    </ligand>
</feature>
<feature type="binding site" evidence="1">
    <location>
        <position position="73"/>
    </location>
    <ligand>
        <name>Mg(2+)</name>
        <dbReference type="ChEBI" id="CHEBI:18420"/>
        <label>2</label>
    </ligand>
</feature>
<feature type="binding site" evidence="1">
    <location>
        <position position="145"/>
    </location>
    <ligand>
        <name>Mg(2+)</name>
        <dbReference type="ChEBI" id="CHEBI:18420"/>
        <label>1</label>
    </ligand>
</feature>